<feature type="transit peptide" description="Mitochondrion" evidence="3">
    <location>
        <begin position="1"/>
        <end position="47"/>
    </location>
</feature>
<feature type="chain" id="PRO_0000371227" description="MYG1 exonuclease">
    <location>
        <begin position="48"/>
        <end position="381"/>
    </location>
</feature>
<feature type="modified residue" description="N6-acetyllysine" evidence="1">
    <location>
        <position position="267"/>
    </location>
</feature>
<feature type="modified residue" description="N6-acetyllysine" evidence="2">
    <location>
        <position position="273"/>
    </location>
</feature>
<name>MYG1_RAT</name>
<keyword id="KW-0007">Acetylation</keyword>
<keyword id="KW-0378">Hydrolase</keyword>
<keyword id="KW-0496">Mitochondrion</keyword>
<keyword id="KW-0540">Nuclease</keyword>
<keyword id="KW-0539">Nucleus</keyword>
<keyword id="KW-1185">Reference proteome</keyword>
<keyword id="KW-0809">Transit peptide</keyword>
<dbReference type="EC" id="3.1.-.-" evidence="1"/>
<dbReference type="EMBL" id="CH474035">
    <property type="protein sequence ID" value="EDL86845.1"/>
    <property type="molecule type" value="Genomic_DNA"/>
</dbReference>
<dbReference type="EMBL" id="BC082112">
    <property type="protein sequence ID" value="AAH82112.1"/>
    <property type="molecule type" value="mRNA"/>
</dbReference>
<dbReference type="RefSeq" id="NP_001005545.1">
    <property type="nucleotide sequence ID" value="NM_001005545.1"/>
</dbReference>
<dbReference type="FunCoup" id="Q641W2">
    <property type="interactions" value="3703"/>
</dbReference>
<dbReference type="STRING" id="10116.ENSRNOP00000017942"/>
<dbReference type="iPTMnet" id="Q641W2"/>
<dbReference type="PhosphoSitePlus" id="Q641W2"/>
<dbReference type="jPOST" id="Q641W2"/>
<dbReference type="PaxDb" id="10116-ENSRNOP00000017942"/>
<dbReference type="Ensembl" id="ENSRNOT00000017942.7">
    <property type="protein sequence ID" value="ENSRNOP00000017942.3"/>
    <property type="gene ID" value="ENSRNOG00000013343.7"/>
</dbReference>
<dbReference type="GeneID" id="300258"/>
<dbReference type="KEGG" id="rno:300258"/>
<dbReference type="UCSC" id="RGD:1359237">
    <property type="organism name" value="rat"/>
</dbReference>
<dbReference type="AGR" id="RGD:1359237"/>
<dbReference type="CTD" id="60314"/>
<dbReference type="RGD" id="1359237">
    <property type="gene designation" value="Myg1"/>
</dbReference>
<dbReference type="eggNOG" id="KOG2948">
    <property type="taxonomic scope" value="Eukaryota"/>
</dbReference>
<dbReference type="GeneTree" id="ENSGT00390000010265"/>
<dbReference type="HOGENOM" id="CLU_051576_0_0_1"/>
<dbReference type="InParanoid" id="Q641W2"/>
<dbReference type="OMA" id="FHCDEVV"/>
<dbReference type="OrthoDB" id="10265310at2759"/>
<dbReference type="PhylomeDB" id="Q641W2"/>
<dbReference type="TreeFam" id="TF313313"/>
<dbReference type="PRO" id="PR:Q641W2"/>
<dbReference type="Proteomes" id="UP000002494">
    <property type="component" value="Chromosome 7"/>
</dbReference>
<dbReference type="Proteomes" id="UP000234681">
    <property type="component" value="Chromosome 7"/>
</dbReference>
<dbReference type="Bgee" id="ENSRNOG00000013343">
    <property type="expression patterns" value="Expressed in pancreas and 20 other cell types or tissues"/>
</dbReference>
<dbReference type="GO" id="GO:0005737">
    <property type="term" value="C:cytoplasm"/>
    <property type="evidence" value="ECO:0000318"/>
    <property type="project" value="GO_Central"/>
</dbReference>
<dbReference type="GO" id="GO:0005759">
    <property type="term" value="C:mitochondrial matrix"/>
    <property type="evidence" value="ECO:0000266"/>
    <property type="project" value="RGD"/>
</dbReference>
<dbReference type="GO" id="GO:0005739">
    <property type="term" value="C:mitochondrion"/>
    <property type="evidence" value="ECO:0000250"/>
    <property type="project" value="UniProtKB"/>
</dbReference>
<dbReference type="GO" id="GO:0005730">
    <property type="term" value="C:nucleolus"/>
    <property type="evidence" value="ECO:0000266"/>
    <property type="project" value="RGD"/>
</dbReference>
<dbReference type="GO" id="GO:0005654">
    <property type="term" value="C:nucleoplasm"/>
    <property type="evidence" value="ECO:0000266"/>
    <property type="project" value="RGD"/>
</dbReference>
<dbReference type="GO" id="GO:0005634">
    <property type="term" value="C:nucleus"/>
    <property type="evidence" value="ECO:0000250"/>
    <property type="project" value="UniProtKB"/>
</dbReference>
<dbReference type="GO" id="GO:0000175">
    <property type="term" value="F:3'-5'-RNA exonuclease activity"/>
    <property type="evidence" value="ECO:0000266"/>
    <property type="project" value="RGD"/>
</dbReference>
<dbReference type="GO" id="GO:0035641">
    <property type="term" value="P:locomotory exploration behavior"/>
    <property type="evidence" value="ECO:0000266"/>
    <property type="project" value="RGD"/>
</dbReference>
<dbReference type="GO" id="GO:0000959">
    <property type="term" value="P:mitochondrial RNA metabolic process"/>
    <property type="evidence" value="ECO:0000266"/>
    <property type="project" value="RGD"/>
</dbReference>
<dbReference type="GO" id="GO:0006397">
    <property type="term" value="P:mRNA processing"/>
    <property type="evidence" value="ECO:0000266"/>
    <property type="project" value="RGD"/>
</dbReference>
<dbReference type="GO" id="GO:0006364">
    <property type="term" value="P:rRNA processing"/>
    <property type="evidence" value="ECO:0000266"/>
    <property type="project" value="RGD"/>
</dbReference>
<dbReference type="InterPro" id="IPR003226">
    <property type="entry name" value="MYG1_exonuclease"/>
</dbReference>
<dbReference type="PANTHER" id="PTHR11215">
    <property type="entry name" value="METAL DEPENDENT HYDROLASE - RELATED"/>
    <property type="match status" value="1"/>
</dbReference>
<dbReference type="PANTHER" id="PTHR11215:SF1">
    <property type="entry name" value="MYG1 EXONUCLEASE"/>
    <property type="match status" value="1"/>
</dbReference>
<dbReference type="Pfam" id="PF03690">
    <property type="entry name" value="MYG1_exonuc"/>
    <property type="match status" value="1"/>
</dbReference>
<gene>
    <name evidence="6 8" type="primary">Myg1</name>
    <name evidence="8" type="synonym">C12orf10</name>
</gene>
<proteinExistence type="evidence at protein level"/>
<organism>
    <name type="scientific">Rattus norvegicus</name>
    <name type="common">Rat</name>
    <dbReference type="NCBI Taxonomy" id="10116"/>
    <lineage>
        <taxon>Eukaryota</taxon>
        <taxon>Metazoa</taxon>
        <taxon>Chordata</taxon>
        <taxon>Craniata</taxon>
        <taxon>Vertebrata</taxon>
        <taxon>Euteleostomi</taxon>
        <taxon>Mammalia</taxon>
        <taxon>Eutheria</taxon>
        <taxon>Euarchontoglires</taxon>
        <taxon>Glires</taxon>
        <taxon>Rodentia</taxon>
        <taxon>Myomorpha</taxon>
        <taxon>Muroidea</taxon>
        <taxon>Muridae</taxon>
        <taxon>Murinae</taxon>
        <taxon>Rattus</taxon>
    </lineage>
</organism>
<evidence type="ECO:0000250" key="1">
    <source>
        <dbReference type="UniProtKB" id="Q9HB07"/>
    </source>
</evidence>
<evidence type="ECO:0000250" key="2">
    <source>
        <dbReference type="UniProtKB" id="Q9JK81"/>
    </source>
</evidence>
<evidence type="ECO:0000255" key="3"/>
<evidence type="ECO:0000269" key="4">
    <source>
    </source>
</evidence>
<evidence type="ECO:0000305" key="5"/>
<evidence type="ECO:0000312" key="6">
    <source>
        <dbReference type="EMBL" id="AAH82112.1"/>
    </source>
</evidence>
<evidence type="ECO:0000312" key="7">
    <source>
        <dbReference type="EMBL" id="EDL86845.1"/>
    </source>
</evidence>
<evidence type="ECO:0000312" key="8">
    <source>
        <dbReference type="RGD" id="1359237"/>
    </source>
</evidence>
<sequence length="381" mass="42889">MGRGFLRGVLTLLPLRSVLQVQHCMLVSEPDLPPKRPRNNLMAPPRIGTHNGTFHCDEALACALLRLLPEYRNAEIVRTRDPEKLALCDIVVDVGGEYNPQRHRYDHHQRTFTETMSSLCPGKPWQTKLSSAGLVYLHFGHKLLAQLLGTSEEDSVVDTIYDKMYENFVEEVDAVDNGISQWAEGEPRYALTTTLSARVSRLNPTWNQPDQDTEAGFRRAMDLVQEEFLQRLNFYQHSWLPARALVEEALAQRFKVDSSGEIVELAKGGCPWKEHLYHLESELSPTVAITFVIYTDQAGQWRVQCVPKEPHSFQSRLPLPEPWRGLRDEALDQVSGIPGCIFVHASGFIGGHHTREGALNMARATLAQRTAPVPLANAVVQ</sequence>
<protein>
    <recommendedName>
        <fullName>MYG1 exonuclease</fullName>
        <ecNumber evidence="1">3.1.-.-</ecNumber>
    </recommendedName>
</protein>
<reference evidence="5 7" key="1">
    <citation type="submission" date="2005-09" db="EMBL/GenBank/DDBJ databases">
        <authorList>
            <person name="Mural R.J."/>
            <person name="Adams M.D."/>
            <person name="Myers E.W."/>
            <person name="Smith H.O."/>
            <person name="Venter J.C."/>
        </authorList>
    </citation>
    <scope>NUCLEOTIDE SEQUENCE [LARGE SCALE GENOMIC DNA]</scope>
    <source>
        <strain evidence="7">Brown Norway</strain>
    </source>
</reference>
<reference evidence="6" key="2">
    <citation type="journal article" date="2004" name="Genome Res.">
        <title>The status, quality, and expansion of the NIH full-length cDNA project: the Mammalian Gene Collection (MGC).</title>
        <authorList>
            <consortium name="The MGC Project Team"/>
        </authorList>
    </citation>
    <scope>NUCLEOTIDE SEQUENCE [LARGE SCALE MRNA]</scope>
    <source>
        <strain evidence="4">Brown Norway</strain>
        <tissue evidence="6">Testis</tissue>
    </source>
</reference>
<reference evidence="5 7" key="3">
    <citation type="submission" date="2009-03" db="UniProtKB">
        <authorList>
            <person name="Maurya D.K."/>
            <person name="Bhargava P."/>
        </authorList>
    </citation>
    <scope>IDENTIFICATION BY MASS SPECTROMETRY</scope>
</reference>
<accession>Q641W2</accession>
<comment type="function">
    <text evidence="1">3'-5' RNA exonuclease which cleaves in situ on specific transcripts in both nucleus and mitochondrion. Involved in regulating spatially segregated organellar RNA processing, acts as a coordinator of nucleo-mitochondrial crosstalk. In nucleolus, processes pre-ribosomal RNA involved in ribosome assembly and alters cytoplasmic translation. In mitochondrial matrix, processes 3'-termini of the mito-ribosomal and messenger RNAs and controls translation of mitochondrial proteins.</text>
</comment>
<comment type="subcellular location">
    <subcellularLocation>
        <location evidence="1">Nucleus</location>
        <location evidence="1">Nucleoplasm</location>
    </subcellularLocation>
    <subcellularLocation>
        <location evidence="1">Mitochondrion matrix</location>
    </subcellularLocation>
    <subcellularLocation>
        <location evidence="2">Nucleus</location>
        <location evidence="2">Nucleolus</location>
    </subcellularLocation>
</comment>
<comment type="similarity">
    <text evidence="5">Belongs to the MYG1 family.</text>
</comment>